<gene>
    <name evidence="1" type="primary">atpF</name>
    <name type="ordered locus">TRQ2_1277</name>
</gene>
<evidence type="ECO:0000255" key="1">
    <source>
        <dbReference type="HAMAP-Rule" id="MF_01398"/>
    </source>
</evidence>
<comment type="function">
    <text evidence="1">F(1)F(0) ATP synthase produces ATP from ADP in the presence of a proton or sodium gradient. F-type ATPases consist of two structural domains, F(1) containing the extramembraneous catalytic core and F(0) containing the membrane proton channel, linked together by a central stalk and a peripheral stalk. During catalysis, ATP synthesis in the catalytic domain of F(1) is coupled via a rotary mechanism of the central stalk subunits to proton translocation.</text>
</comment>
<comment type="function">
    <text evidence="1">Component of the F(0) channel, it forms part of the peripheral stalk, linking F(1) to F(0).</text>
</comment>
<comment type="subunit">
    <text evidence="1">F-type ATPases have 2 components, F(1) - the catalytic core - and F(0) - the membrane proton channel. F(1) has five subunits: alpha(3), beta(3), gamma(1), delta(1), epsilon(1). F(0) has three main subunits: a(1), b(2) and c(10-14). The alpha and beta chains form an alternating ring which encloses part of the gamma chain. F(1) is attached to F(0) by a central stalk formed by the gamma and epsilon chains, while a peripheral stalk is formed by the delta and b chains.</text>
</comment>
<comment type="subcellular location">
    <subcellularLocation>
        <location evidence="1">Cell inner membrane</location>
        <topology evidence="1">Single-pass membrane protein</topology>
    </subcellularLocation>
</comment>
<comment type="similarity">
    <text evidence="1">Belongs to the ATPase B chain family.</text>
</comment>
<feature type="chain" id="PRO_0000368845" description="ATP synthase subunit b">
    <location>
        <begin position="1"/>
        <end position="164"/>
    </location>
</feature>
<feature type="transmembrane region" description="Helical" evidence="1">
    <location>
        <begin position="10"/>
        <end position="32"/>
    </location>
</feature>
<sequence>MGFLEINWTSAAMLMLFVLMVYFLNKFLYTPFIEMAEKRRKKVEEDLKSAEQLKEEAEKMRSEAERFLSEARQRADEIVESARKEAEAIVEEAREKAKKEAQNIVESAKTQIEVEYKKALEQVQERAAELSVILATKLLQKVFQDERARREYLVKILKEEIEKS</sequence>
<reference key="1">
    <citation type="journal article" date="2011" name="J. Bacteriol.">
        <title>Genome sequence of Thermotoga sp. strain RQ2, a hyperthermophilic bacterium isolated from a geothermally heated region of the seafloor near Ribeira Quente, the Azores.</title>
        <authorList>
            <person name="Swithers K.S."/>
            <person name="DiPippo J.L."/>
            <person name="Bruce D.C."/>
            <person name="Detter C."/>
            <person name="Tapia R."/>
            <person name="Han S."/>
            <person name="Saunders E."/>
            <person name="Goodwin L.A."/>
            <person name="Han J."/>
            <person name="Woyke T."/>
            <person name="Pitluck S."/>
            <person name="Pennacchio L."/>
            <person name="Nolan M."/>
            <person name="Mikhailova N."/>
            <person name="Lykidis A."/>
            <person name="Land M.L."/>
            <person name="Brettin T."/>
            <person name="Stetter K.O."/>
            <person name="Nelson K.E."/>
            <person name="Gogarten J.P."/>
            <person name="Noll K.M."/>
        </authorList>
    </citation>
    <scope>NUCLEOTIDE SEQUENCE [LARGE SCALE GENOMIC DNA]</scope>
    <source>
        <strain>RQ2</strain>
    </source>
</reference>
<keyword id="KW-0066">ATP synthesis</keyword>
<keyword id="KW-0997">Cell inner membrane</keyword>
<keyword id="KW-1003">Cell membrane</keyword>
<keyword id="KW-0138">CF(0)</keyword>
<keyword id="KW-0375">Hydrogen ion transport</keyword>
<keyword id="KW-0406">Ion transport</keyword>
<keyword id="KW-0472">Membrane</keyword>
<keyword id="KW-0812">Transmembrane</keyword>
<keyword id="KW-1133">Transmembrane helix</keyword>
<keyword id="KW-0813">Transport</keyword>
<name>ATPF_THESQ</name>
<proteinExistence type="inferred from homology"/>
<organism>
    <name type="scientific">Thermotoga sp. (strain RQ2)</name>
    <dbReference type="NCBI Taxonomy" id="126740"/>
    <lineage>
        <taxon>Bacteria</taxon>
        <taxon>Thermotogati</taxon>
        <taxon>Thermotogota</taxon>
        <taxon>Thermotogae</taxon>
        <taxon>Thermotogales</taxon>
        <taxon>Thermotogaceae</taxon>
        <taxon>Thermotoga</taxon>
    </lineage>
</organism>
<dbReference type="EMBL" id="CP000969">
    <property type="protein sequence ID" value="ACB09621.1"/>
    <property type="molecule type" value="Genomic_DNA"/>
</dbReference>
<dbReference type="RefSeq" id="WP_004082072.1">
    <property type="nucleotide sequence ID" value="NC_010483.1"/>
</dbReference>
<dbReference type="SMR" id="B1LBC3"/>
<dbReference type="KEGG" id="trq:TRQ2_1277"/>
<dbReference type="HOGENOM" id="CLU_079215_4_5_0"/>
<dbReference type="Proteomes" id="UP000001687">
    <property type="component" value="Chromosome"/>
</dbReference>
<dbReference type="GO" id="GO:0005886">
    <property type="term" value="C:plasma membrane"/>
    <property type="evidence" value="ECO:0007669"/>
    <property type="project" value="UniProtKB-SubCell"/>
</dbReference>
<dbReference type="GO" id="GO:0045259">
    <property type="term" value="C:proton-transporting ATP synthase complex"/>
    <property type="evidence" value="ECO:0007669"/>
    <property type="project" value="UniProtKB-KW"/>
</dbReference>
<dbReference type="GO" id="GO:0046933">
    <property type="term" value="F:proton-transporting ATP synthase activity, rotational mechanism"/>
    <property type="evidence" value="ECO:0007669"/>
    <property type="project" value="UniProtKB-UniRule"/>
</dbReference>
<dbReference type="GO" id="GO:0046961">
    <property type="term" value="F:proton-transporting ATPase activity, rotational mechanism"/>
    <property type="evidence" value="ECO:0007669"/>
    <property type="project" value="TreeGrafter"/>
</dbReference>
<dbReference type="CDD" id="cd06503">
    <property type="entry name" value="ATP-synt_Fo_b"/>
    <property type="match status" value="1"/>
</dbReference>
<dbReference type="Gene3D" id="1.20.5.620">
    <property type="entry name" value="F1F0 ATP synthase subunit B, membrane domain"/>
    <property type="match status" value="1"/>
</dbReference>
<dbReference type="HAMAP" id="MF_01398">
    <property type="entry name" value="ATP_synth_b_bprime"/>
    <property type="match status" value="1"/>
</dbReference>
<dbReference type="InterPro" id="IPR028987">
    <property type="entry name" value="ATP_synth_B-like_membr_sf"/>
</dbReference>
<dbReference type="InterPro" id="IPR002146">
    <property type="entry name" value="ATP_synth_b/b'su_bac/chlpt"/>
</dbReference>
<dbReference type="InterPro" id="IPR005864">
    <property type="entry name" value="ATP_synth_F0_bsu_bac"/>
</dbReference>
<dbReference type="InterPro" id="IPR050059">
    <property type="entry name" value="ATP_synthase_B_chain"/>
</dbReference>
<dbReference type="NCBIfam" id="TIGR01144">
    <property type="entry name" value="ATP_synt_b"/>
    <property type="match status" value="1"/>
</dbReference>
<dbReference type="PANTHER" id="PTHR33445:SF1">
    <property type="entry name" value="ATP SYNTHASE SUBUNIT B"/>
    <property type="match status" value="1"/>
</dbReference>
<dbReference type="PANTHER" id="PTHR33445">
    <property type="entry name" value="ATP SYNTHASE SUBUNIT B', CHLOROPLASTIC"/>
    <property type="match status" value="1"/>
</dbReference>
<dbReference type="Pfam" id="PF00430">
    <property type="entry name" value="ATP-synt_B"/>
    <property type="match status" value="1"/>
</dbReference>
<dbReference type="SUPFAM" id="SSF81573">
    <property type="entry name" value="F1F0 ATP synthase subunit B, membrane domain"/>
    <property type="match status" value="1"/>
</dbReference>
<accession>B1LBC3</accession>
<protein>
    <recommendedName>
        <fullName evidence="1">ATP synthase subunit b</fullName>
    </recommendedName>
    <alternativeName>
        <fullName evidence="1">ATP synthase F(0) sector subunit b</fullName>
    </alternativeName>
    <alternativeName>
        <fullName evidence="1">ATPase subunit I</fullName>
    </alternativeName>
    <alternativeName>
        <fullName evidence="1">F-type ATPase subunit b</fullName>
        <shortName evidence="1">F-ATPase subunit b</shortName>
    </alternativeName>
</protein>